<sequence length="184" mass="20707">MISPNHLILLFCVNCAFLVASDATPKRSPLGTMRFGKRAIADEMTFEEDGYYPSNVMWKRSTVDSSEPVIRDQRTPLGTMRFGKRSAEPFGTMRFGKRNPENDTPFGTMRFGKRASEDALFGTMRFGKREDGNAPFGTMKFGKREAEEPLGTMRFGKRSADDSAPFGTMRFGKRNPLGTMRFGK</sequence>
<gene>
    <name evidence="9 10" type="primary">flp-3</name>
    <name type="ORF">W07E11.2</name>
</gene>
<name>FLP03_CAEEL</name>
<reference evidence="7 8" key="1">
    <citation type="journal article" date="1998" name="Brain Res. Mol. Brain Res.">
        <title>FMRFamide-related gene family in the nematode, Caenorhabditis elegans.</title>
        <authorList>
            <person name="Nelson L.S."/>
            <person name="Kim K."/>
            <person name="Memmott J.E."/>
            <person name="Li C."/>
        </authorList>
    </citation>
    <scope>NUCLEOTIDE SEQUENCE [MRNA]</scope>
    <scope>DEVELOPMENTAL STAGE</scope>
    <source>
        <strain evidence="8">Bristol N2</strain>
    </source>
</reference>
<reference evidence="9" key="2">
    <citation type="journal article" date="1998" name="Science">
        <title>Genome sequence of the nematode C. elegans: a platform for investigating biology.</title>
        <authorList>
            <consortium name="The C. elegans sequencing consortium"/>
        </authorList>
    </citation>
    <scope>NUCLEOTIDE SEQUENCE [LARGE SCALE GENOMIC DNA]</scope>
    <source>
        <strain evidence="9">Bristol N2</strain>
    </source>
</reference>
<reference evidence="7" key="3">
    <citation type="journal article" date="2005" name="Biochem. Biophys. Res. Commun.">
        <title>Discovering neuropeptides in Caenorhabditis elegans by two dimensional liquid chromatography and mass spectrometry.</title>
        <authorList>
            <person name="Husson S.J."/>
            <person name="Clynen E."/>
            <person name="Baggerman G."/>
            <person name="De Loof A."/>
            <person name="Schoofs L."/>
        </authorList>
    </citation>
    <scope>PROTEIN SEQUENCE OF 75-82; 86-95; 99-111; 115-126; 145-155 AND 159-171</scope>
    <scope>AMIDATION AT PHE-82; PHE-95; PHE-111; PHE-126; PHE-155 AND PHE-171</scope>
    <source>
        <strain evidence="4">Bristol N2</strain>
    </source>
</reference>
<reference evidence="7" key="4">
    <citation type="journal article" date="2004" name="J. Comp. Neurol.">
        <title>Expression and regulation of an FMRFamide-related neuropeptide gene family in Caenorhabditis elegans.</title>
        <authorList>
            <person name="Kim K."/>
            <person name="Li C."/>
        </authorList>
    </citation>
    <scope>TISSUE SPECIFICITY</scope>
    <scope>DEVELOPMENTAL STAGE</scope>
</reference>
<reference evidence="7" key="5">
    <citation type="journal article" date="2005" name="J. Neurobiol.">
        <title>Role of a FMRFamide-like family of neuropeptides in the pharyngeal nervous system of Caenorhabditis elegans.</title>
        <authorList>
            <person name="Papaioannou S."/>
            <person name="Marsden D."/>
            <person name="Franks C.J."/>
            <person name="Walker R.J."/>
            <person name="Holden-Dye L."/>
        </authorList>
    </citation>
    <scope>FUNCTION</scope>
</reference>
<dbReference type="EMBL" id="AF042389">
    <property type="protein sequence ID" value="AAC08940.1"/>
    <property type="molecule type" value="mRNA"/>
</dbReference>
<dbReference type="EMBL" id="Z49868">
    <property type="protein sequence ID" value="CAA90030.1"/>
    <property type="molecule type" value="Genomic_DNA"/>
</dbReference>
<dbReference type="PIR" id="T26262">
    <property type="entry name" value="T26262"/>
</dbReference>
<dbReference type="RefSeq" id="NP_509694.1">
    <property type="nucleotide sequence ID" value="NM_077293.8"/>
</dbReference>
<dbReference type="BioGRID" id="46135">
    <property type="interactions" value="7"/>
</dbReference>
<dbReference type="FunCoup" id="Q23212">
    <property type="interactions" value="2"/>
</dbReference>
<dbReference type="STRING" id="6239.W07E11.2.1"/>
<dbReference type="PaxDb" id="6239-W07E11.2"/>
<dbReference type="EnsemblMetazoa" id="W07E11.2.1">
    <property type="protein sequence ID" value="W07E11.2.1"/>
    <property type="gene ID" value="WBGene00001446"/>
</dbReference>
<dbReference type="GeneID" id="181221"/>
<dbReference type="KEGG" id="cel:CELE_W07E11.2"/>
<dbReference type="UCSC" id="W07E11.2">
    <property type="organism name" value="c. elegans"/>
</dbReference>
<dbReference type="AGR" id="WB:WBGene00001446"/>
<dbReference type="CTD" id="181221"/>
<dbReference type="WormBase" id="W07E11.2">
    <property type="protein sequence ID" value="CE02373"/>
    <property type="gene ID" value="WBGene00001446"/>
    <property type="gene designation" value="flp-3"/>
</dbReference>
<dbReference type="eggNOG" id="ENOG502T0VU">
    <property type="taxonomic scope" value="Eukaryota"/>
</dbReference>
<dbReference type="GeneTree" id="ENSGT00970000196033"/>
<dbReference type="HOGENOM" id="CLU_1311141_0_0_1"/>
<dbReference type="InParanoid" id="Q23212"/>
<dbReference type="OMA" id="APFGTMR"/>
<dbReference type="OrthoDB" id="5786262at2759"/>
<dbReference type="PhylomeDB" id="Q23212"/>
<dbReference type="PRO" id="PR:Q23212"/>
<dbReference type="Proteomes" id="UP000001940">
    <property type="component" value="Chromosome X"/>
</dbReference>
<dbReference type="Bgee" id="WBGene00001446">
    <property type="expression patterns" value="Expressed in larva and 3 other cell types or tissues"/>
</dbReference>
<dbReference type="GO" id="GO:0005576">
    <property type="term" value="C:extracellular region"/>
    <property type="evidence" value="ECO:0007669"/>
    <property type="project" value="UniProtKB-SubCell"/>
</dbReference>
<dbReference type="GO" id="GO:0045759">
    <property type="term" value="P:negative regulation of action potential"/>
    <property type="evidence" value="ECO:0000314"/>
    <property type="project" value="WormBase"/>
</dbReference>
<dbReference type="GO" id="GO:0007218">
    <property type="term" value="P:neuropeptide signaling pathway"/>
    <property type="evidence" value="ECO:0000314"/>
    <property type="project" value="WormBase"/>
</dbReference>
<dbReference type="GO" id="GO:0043051">
    <property type="term" value="P:regulation of nematode pharyngeal pumping"/>
    <property type="evidence" value="ECO:0000314"/>
    <property type="project" value="WormBase"/>
</dbReference>
<dbReference type="InterPro" id="IPR002544">
    <property type="entry name" value="FMRFamid-related_peptide-like"/>
</dbReference>
<dbReference type="InterPro" id="IPR051041">
    <property type="entry name" value="FMRFamide-related_np"/>
</dbReference>
<dbReference type="PANTHER" id="PTHR20986:SF19">
    <property type="entry name" value="FMRFAMIDE-LIKE NEUROPEPTIDES 3"/>
    <property type="match status" value="1"/>
</dbReference>
<dbReference type="PANTHER" id="PTHR20986">
    <property type="entry name" value="FMRFAMIDE-RELATED PEPTIDES"/>
    <property type="match status" value="1"/>
</dbReference>
<dbReference type="Pfam" id="PF01581">
    <property type="entry name" value="FARP"/>
    <property type="match status" value="5"/>
</dbReference>
<dbReference type="SMART" id="SM00029">
    <property type="entry name" value="GASTRIN"/>
    <property type="match status" value="8"/>
</dbReference>
<feature type="signal peptide" evidence="1">
    <location>
        <begin position="1"/>
        <end position="23"/>
    </location>
</feature>
<feature type="propeptide" id="PRO_0000312032" evidence="1">
    <location>
        <begin position="24"/>
        <end position="25"/>
    </location>
</feature>
<feature type="peptide" id="PRO_0000312033" description="SPLGTMRF-amide" evidence="1">
    <location>
        <begin position="28"/>
        <end position="35"/>
    </location>
</feature>
<feature type="propeptide" id="PRO_0000312034" evidence="1">
    <location>
        <begin position="39"/>
        <end position="73"/>
    </location>
</feature>
<feature type="peptide" id="PRO_0000312035" description="TPLGTMRF-amide" evidence="4">
    <location>
        <begin position="75"/>
        <end position="82"/>
    </location>
</feature>
<feature type="peptide" id="PRO_0000312036" description="SAEPFGTMRF-amide" evidence="4">
    <location>
        <begin position="86"/>
        <end position="95"/>
    </location>
</feature>
<feature type="peptide" id="PRO_0000312037" description="NPENDTPFGTMRF-amide" evidence="4">
    <location>
        <begin position="99"/>
        <end position="111"/>
    </location>
</feature>
<feature type="peptide" id="PRO_0000312038" description="ASEDALFGTMRF-amide" evidence="4">
    <location>
        <begin position="115"/>
        <end position="126"/>
    </location>
</feature>
<feature type="propeptide" id="PRO_0000312039" evidence="1">
    <location>
        <begin position="130"/>
        <end position="142"/>
    </location>
</feature>
<feature type="peptide" id="PRO_0000312040" description="EAEEPLGTMRF-amide" evidence="4">
    <location>
        <begin position="145"/>
        <end position="155"/>
    </location>
</feature>
<feature type="peptide" id="PRO_0000312041" description="SADDSAPFGTMRF-amide" evidence="4">
    <location>
        <begin position="159"/>
        <end position="171"/>
    </location>
</feature>
<feature type="peptide" id="PRO_0000312042" description="NPLGTMRF-amide" evidence="1">
    <location>
        <begin position="175"/>
        <end position="182"/>
    </location>
</feature>
<feature type="region of interest" description="Disordered" evidence="2">
    <location>
        <begin position="90"/>
        <end position="110"/>
    </location>
</feature>
<feature type="region of interest" description="Disordered" evidence="2">
    <location>
        <begin position="150"/>
        <end position="184"/>
    </location>
</feature>
<feature type="modified residue" description="Phenylalanine amide" evidence="1">
    <location>
        <position position="35"/>
    </location>
</feature>
<feature type="modified residue" description="Phenylalanine amide" evidence="4">
    <location>
        <position position="82"/>
    </location>
</feature>
<feature type="modified residue" description="Phenylalanine amide" evidence="4">
    <location>
        <position position="95"/>
    </location>
</feature>
<feature type="modified residue" description="Phenylalanine amide" evidence="4">
    <location>
        <position position="111"/>
    </location>
</feature>
<feature type="modified residue" description="Phenylalanine amide" evidence="4">
    <location>
        <position position="126"/>
    </location>
</feature>
<feature type="modified residue" description="Phenylalanine amide" evidence="4">
    <location>
        <position position="155"/>
    </location>
</feature>
<feature type="modified residue" description="Phenylalanine amide" evidence="4">
    <location>
        <position position="171"/>
    </location>
</feature>
<feature type="modified residue" description="Phenylalanine amide" evidence="1">
    <location>
        <position position="182"/>
    </location>
</feature>
<proteinExistence type="evidence at protein level"/>
<organism>
    <name type="scientific">Caenorhabditis elegans</name>
    <dbReference type="NCBI Taxonomy" id="6239"/>
    <lineage>
        <taxon>Eukaryota</taxon>
        <taxon>Metazoa</taxon>
        <taxon>Ecdysozoa</taxon>
        <taxon>Nematoda</taxon>
        <taxon>Chromadorea</taxon>
        <taxon>Rhabditida</taxon>
        <taxon>Rhabditina</taxon>
        <taxon>Rhabditomorpha</taxon>
        <taxon>Rhabditoidea</taxon>
        <taxon>Rhabditidae</taxon>
        <taxon>Peloderinae</taxon>
        <taxon>Caenorhabditis</taxon>
    </lineage>
</organism>
<keyword id="KW-0027">Amidation</keyword>
<keyword id="KW-0165">Cleavage on pair of basic residues</keyword>
<keyword id="KW-0903">Direct protein sequencing</keyword>
<keyword id="KW-0527">Neuropeptide</keyword>
<keyword id="KW-1185">Reference proteome</keyword>
<keyword id="KW-0964">Secreted</keyword>
<keyword id="KW-0732">Signal</keyword>
<evidence type="ECO:0000255" key="1"/>
<evidence type="ECO:0000256" key="2">
    <source>
        <dbReference type="SAM" id="MobiDB-lite"/>
    </source>
</evidence>
<evidence type="ECO:0000269" key="3">
    <source>
    </source>
</evidence>
<evidence type="ECO:0000269" key="4">
    <source>
    </source>
</evidence>
<evidence type="ECO:0000269" key="5">
    <source>
    </source>
</evidence>
<evidence type="ECO:0000269" key="6">
    <source>
    </source>
</evidence>
<evidence type="ECO:0000305" key="7"/>
<evidence type="ECO:0000312" key="8">
    <source>
        <dbReference type="EMBL" id="AAC08940.1"/>
    </source>
</evidence>
<evidence type="ECO:0000312" key="9">
    <source>
        <dbReference type="EMBL" id="CAA90030.1"/>
    </source>
</evidence>
<evidence type="ECO:0000312" key="10">
    <source>
        <dbReference type="WormBase" id="W07E11.2"/>
    </source>
</evidence>
<comment type="function">
    <text evidence="5">FMRFamides and FMRFamide-like peptides are neuropeptides. SAEPFGTMRF-amide inhibits the activity of dissected pharyngeal myogenic muscle system.</text>
</comment>
<comment type="subcellular location">
    <subcellularLocation>
        <location evidence="7">Secreted</location>
    </subcellularLocation>
</comment>
<comment type="tissue specificity">
    <text evidence="3">Each flp gene is expressed in a distinct set of neurons. Flp-3 is expressed in the IL1 and PQR neurons.</text>
</comment>
<comment type="developmental stage">
    <text evidence="3 6">Expressed from the comma stage of embryogenesis, during all larval stages, and in adults.</text>
</comment>
<comment type="similarity">
    <text evidence="1">Belongs to the FARP (FMRFamide related peptide) family.</text>
</comment>
<accession>Q23212</accession>
<protein>
    <recommendedName>
        <fullName>FMRFamide-like neuropeptides 3</fullName>
    </recommendedName>
    <component>
        <recommendedName>
            <fullName>SPLGTMRF-amide</fullName>
        </recommendedName>
    </component>
    <component>
        <recommendedName>
            <fullName>TPLGTMRF-amide</fullName>
        </recommendedName>
    </component>
    <component>
        <recommendedName>
            <fullName>SAEPFGTMRF-amide</fullName>
        </recommendedName>
    </component>
    <component>
        <recommendedName>
            <fullName>NPENDTPFGTMRF-amide</fullName>
        </recommendedName>
    </component>
    <component>
        <recommendedName>
            <fullName>ASEDALFGTMRF-amide</fullName>
        </recommendedName>
    </component>
    <component>
        <recommendedName>
            <fullName>EAEEPLGTMRF-amide</fullName>
        </recommendedName>
    </component>
    <component>
        <recommendedName>
            <fullName>SADDSAPFGTMRF-amide</fullName>
        </recommendedName>
    </component>
    <component>
        <recommendedName>
            <fullName>NPLGTMRF-amide</fullName>
        </recommendedName>
    </component>
</protein>